<comment type="function">
    <text evidence="4">Receptor for the endogenous fatty-acid ethanolamide oleoylethanolamide (OEA) and lysophosphatidylcholine (LPC). Functions as a glucose-dependent insulinotropic receptor. The activity of this receptor is mediated by G proteins which activate adenylate cyclase. Seems to act through a G(s) mediated pathway.</text>
</comment>
<comment type="interaction">
    <interactant intactId="EBI-17253531">
        <id>Q8TDV5</id>
    </interactant>
    <interactant intactId="EBI-12092171">
        <id>Q12797-6</id>
        <label>ASPH</label>
    </interactant>
    <organismsDiffer>false</organismsDiffer>
    <experiments>3</experiments>
</comment>
<comment type="subcellular location">
    <subcellularLocation>
        <location>Cell membrane</location>
        <topology>Multi-pass membrane protein</topology>
    </subcellularLocation>
</comment>
<comment type="tissue specificity">
    <text evidence="3">Predominantly expressed in the pancreas, especially in the islets.</text>
</comment>
<comment type="similarity">
    <text evidence="2">Belongs to the G-protein coupled receptor 1 family.</text>
</comment>
<keyword id="KW-0002">3D-structure</keyword>
<keyword id="KW-1003">Cell membrane</keyword>
<keyword id="KW-0297">G-protein coupled receptor</keyword>
<keyword id="KW-0446">Lipid-binding</keyword>
<keyword id="KW-0472">Membrane</keyword>
<keyword id="KW-0675">Receptor</keyword>
<keyword id="KW-1185">Reference proteome</keyword>
<keyword id="KW-0807">Transducer</keyword>
<keyword id="KW-0812">Transmembrane</keyword>
<keyword id="KW-1133">Transmembrane helix</keyword>
<proteinExistence type="evidence at protein level"/>
<organism>
    <name type="scientific">Homo sapiens</name>
    <name type="common">Human</name>
    <dbReference type="NCBI Taxonomy" id="9606"/>
    <lineage>
        <taxon>Eukaryota</taxon>
        <taxon>Metazoa</taxon>
        <taxon>Chordata</taxon>
        <taxon>Craniata</taxon>
        <taxon>Vertebrata</taxon>
        <taxon>Euteleostomi</taxon>
        <taxon>Mammalia</taxon>
        <taxon>Eutheria</taxon>
        <taxon>Euarchontoglires</taxon>
        <taxon>Primates</taxon>
        <taxon>Haplorrhini</taxon>
        <taxon>Catarrhini</taxon>
        <taxon>Hominidae</taxon>
        <taxon>Homo</taxon>
    </lineage>
</organism>
<name>GP119_HUMAN</name>
<feature type="chain" id="PRO_0000069607" description="Glucose-dependent insulinotropic receptor">
    <location>
        <begin position="1"/>
        <end position="335"/>
    </location>
</feature>
<feature type="topological domain" description="Extracellular" evidence="1">
    <location>
        <begin position="1"/>
        <end position="12"/>
    </location>
</feature>
<feature type="transmembrane region" description="Helical; Name=1" evidence="1">
    <location>
        <begin position="13"/>
        <end position="33"/>
    </location>
</feature>
<feature type="topological domain" description="Cytoplasmic" evidence="1">
    <location>
        <begin position="34"/>
        <end position="37"/>
    </location>
</feature>
<feature type="transmembrane region" description="Helical; Name=2" evidence="1">
    <location>
        <begin position="38"/>
        <end position="58"/>
    </location>
</feature>
<feature type="topological domain" description="Extracellular" evidence="1">
    <location>
        <begin position="59"/>
        <end position="81"/>
    </location>
</feature>
<feature type="transmembrane region" description="Helical; Name=3" evidence="1">
    <location>
        <begin position="82"/>
        <end position="102"/>
    </location>
</feature>
<feature type="topological domain" description="Cytoplasmic" evidence="1">
    <location>
        <begin position="103"/>
        <end position="125"/>
    </location>
</feature>
<feature type="transmembrane region" description="Helical; Name=4" evidence="1">
    <location>
        <begin position="126"/>
        <end position="146"/>
    </location>
</feature>
<feature type="topological domain" description="Extracellular" evidence="1">
    <location>
        <begin position="147"/>
        <end position="164"/>
    </location>
</feature>
<feature type="transmembrane region" description="Helical; Name=5" evidence="1">
    <location>
        <begin position="165"/>
        <end position="185"/>
    </location>
</feature>
<feature type="topological domain" description="Cytoplasmic" evidence="1">
    <location>
        <begin position="186"/>
        <end position="226"/>
    </location>
</feature>
<feature type="transmembrane region" description="Helical; Name=6" evidence="1">
    <location>
        <begin position="227"/>
        <end position="247"/>
    </location>
</feature>
<feature type="topological domain" description="Extracellular" evidence="1">
    <location>
        <begin position="248"/>
        <end position="262"/>
    </location>
</feature>
<feature type="transmembrane region" description="Helical; Name=7" evidence="1">
    <location>
        <begin position="263"/>
        <end position="283"/>
    </location>
</feature>
<feature type="topological domain" description="Cytoplasmic" evidence="1">
    <location>
        <begin position="284"/>
        <end position="335"/>
    </location>
</feature>
<feature type="sequence variant" id="VAR_037221" description="In dbSNP:rs5975187.">
    <original>S</original>
    <variation>L</variation>
    <location>
        <position position="309"/>
    </location>
</feature>
<feature type="sequence conflict" description="In Ref. 5; AAI01167." evidence="5" ref="5">
    <original>I</original>
    <variation>T</variation>
    <location>
        <position position="325"/>
    </location>
</feature>
<feature type="helix" evidence="6">
    <location>
        <begin position="6"/>
        <end position="35"/>
    </location>
</feature>
<feature type="helix" evidence="6">
    <location>
        <begin position="39"/>
        <end position="59"/>
    </location>
</feature>
<feature type="helix" evidence="6">
    <location>
        <begin position="63"/>
        <end position="67"/>
    </location>
</feature>
<feature type="strand" evidence="6">
    <location>
        <begin position="69"/>
        <end position="71"/>
    </location>
</feature>
<feature type="helix" evidence="8">
    <location>
        <begin position="72"/>
        <end position="74"/>
    </location>
</feature>
<feature type="helix" evidence="6">
    <location>
        <begin position="75"/>
        <end position="108"/>
    </location>
</feature>
<feature type="helix" evidence="6">
    <location>
        <begin position="110"/>
        <end position="116"/>
    </location>
</feature>
<feature type="helix" evidence="6">
    <location>
        <begin position="119"/>
        <end position="138"/>
    </location>
</feature>
<feature type="helix" evidence="6">
    <location>
        <begin position="139"/>
        <end position="142"/>
    </location>
</feature>
<feature type="strand" evidence="7">
    <location>
        <begin position="143"/>
        <end position="147"/>
    </location>
</feature>
<feature type="turn" evidence="6">
    <location>
        <begin position="157"/>
        <end position="159"/>
    </location>
</feature>
<feature type="helix" evidence="6">
    <location>
        <begin position="164"/>
        <end position="172"/>
    </location>
</feature>
<feature type="helix" evidence="6">
    <location>
        <begin position="174"/>
        <end position="209"/>
    </location>
</feature>
<feature type="helix" evidence="6">
    <location>
        <begin position="222"/>
        <end position="235"/>
    </location>
</feature>
<feature type="turn" evidence="6">
    <location>
        <begin position="236"/>
        <end position="238"/>
    </location>
</feature>
<feature type="helix" evidence="6">
    <location>
        <begin position="239"/>
        <end position="250"/>
    </location>
</feature>
<feature type="helix" evidence="6">
    <location>
        <begin position="256"/>
        <end position="262"/>
    </location>
</feature>
<feature type="helix" evidence="6">
    <location>
        <begin position="264"/>
        <end position="279"/>
    </location>
</feature>
<feature type="turn" evidence="6">
    <location>
        <begin position="280"/>
        <end position="282"/>
    </location>
</feature>
<feature type="helix" evidence="6">
    <location>
        <begin position="284"/>
        <end position="299"/>
    </location>
</feature>
<sequence>MESSFSFGVILAVLASLIIATNTLVAVAVLLLIHKNDGVSLCFTLNLAVADTLIGVAISGLLTDQLSSPSRPTQKTLCSLRMAFVTSSAAASVLTVMLITFDRYLAIKQPFRYLKIMSGFVAGACIAGLWLVSYLIGFLPLGIPMFQQTAYKGQCSFFAVFHPHFVLTLSCVGFFPAMLLFVFFYCDMLKIASMHSQQIRKMEHAGAMAGGYRSPRTPSDFKALRTVSVLIGSFALSWTPFLITGIVQVACQECHLYLVLERYLWLLGVGNSLLNPLIYAYWQKEVRLQLYHMALGVKKVLTSFLLFLSARNCGPERPRESSCHIVTISSSEFDG</sequence>
<reference key="1">
    <citation type="journal article" date="2002" name="FEBS Lett.">
        <title>Identification of G protein-coupled receptor genes from the human genome sequence.</title>
        <authorList>
            <person name="Takeda S."/>
            <person name="Kadowaki S."/>
            <person name="Haga T."/>
            <person name="Takaesu H."/>
            <person name="Mitaku S."/>
        </authorList>
    </citation>
    <scope>NUCLEOTIDE SEQUENCE [LARGE SCALE GENOMIC DNA]</scope>
</reference>
<reference key="2">
    <citation type="submission" date="2001-07" db="EMBL/GenBank/DDBJ databases">
        <title>Genome-wide discovery and analysis of human seven transmembrane helix receptor genes.</title>
        <authorList>
            <person name="Suwa M."/>
            <person name="Sato T."/>
            <person name="Okouchi I."/>
            <person name="Arita M."/>
            <person name="Futami K."/>
            <person name="Matsumoto S."/>
            <person name="Tsutsumi S."/>
            <person name="Aburatani H."/>
            <person name="Asai K."/>
            <person name="Akiyama Y."/>
        </authorList>
    </citation>
    <scope>NUCLEOTIDE SEQUENCE [GENOMIC DNA]</scope>
</reference>
<reference key="3">
    <citation type="journal article" date="2003" name="FEBS Lett.">
        <title>Seven evolutionarily conserved human rhodopsin G protein-coupled receptors lacking close relatives.</title>
        <authorList>
            <person name="Fredriksson R."/>
            <person name="Hoeglund P.J."/>
            <person name="Gloriam D.E.I."/>
            <person name="Lagerstroem M.C."/>
            <person name="Schioeth H.B."/>
        </authorList>
    </citation>
    <scope>NUCLEOTIDE SEQUENCE [MRNA]</scope>
</reference>
<reference key="4">
    <citation type="journal article" date="2005" name="Nature">
        <title>The DNA sequence of the human X chromosome.</title>
        <authorList>
            <person name="Ross M.T."/>
            <person name="Grafham D.V."/>
            <person name="Coffey A.J."/>
            <person name="Scherer S."/>
            <person name="McLay K."/>
            <person name="Muzny D."/>
            <person name="Platzer M."/>
            <person name="Howell G.R."/>
            <person name="Burrows C."/>
            <person name="Bird C.P."/>
            <person name="Frankish A."/>
            <person name="Lovell F.L."/>
            <person name="Howe K.L."/>
            <person name="Ashurst J.L."/>
            <person name="Fulton R.S."/>
            <person name="Sudbrak R."/>
            <person name="Wen G."/>
            <person name="Jones M.C."/>
            <person name="Hurles M.E."/>
            <person name="Andrews T.D."/>
            <person name="Scott C.E."/>
            <person name="Searle S."/>
            <person name="Ramser J."/>
            <person name="Whittaker A."/>
            <person name="Deadman R."/>
            <person name="Carter N.P."/>
            <person name="Hunt S.E."/>
            <person name="Chen R."/>
            <person name="Cree A."/>
            <person name="Gunaratne P."/>
            <person name="Havlak P."/>
            <person name="Hodgson A."/>
            <person name="Metzker M.L."/>
            <person name="Richards S."/>
            <person name="Scott G."/>
            <person name="Steffen D."/>
            <person name="Sodergren E."/>
            <person name="Wheeler D.A."/>
            <person name="Worley K.C."/>
            <person name="Ainscough R."/>
            <person name="Ambrose K.D."/>
            <person name="Ansari-Lari M.A."/>
            <person name="Aradhya S."/>
            <person name="Ashwell R.I."/>
            <person name="Babbage A.K."/>
            <person name="Bagguley C.L."/>
            <person name="Ballabio A."/>
            <person name="Banerjee R."/>
            <person name="Barker G.E."/>
            <person name="Barlow K.F."/>
            <person name="Barrett I.P."/>
            <person name="Bates K.N."/>
            <person name="Beare D.M."/>
            <person name="Beasley H."/>
            <person name="Beasley O."/>
            <person name="Beck A."/>
            <person name="Bethel G."/>
            <person name="Blechschmidt K."/>
            <person name="Brady N."/>
            <person name="Bray-Allen S."/>
            <person name="Bridgeman A.M."/>
            <person name="Brown A.J."/>
            <person name="Brown M.J."/>
            <person name="Bonnin D."/>
            <person name="Bruford E.A."/>
            <person name="Buhay C."/>
            <person name="Burch P."/>
            <person name="Burford D."/>
            <person name="Burgess J."/>
            <person name="Burrill W."/>
            <person name="Burton J."/>
            <person name="Bye J.M."/>
            <person name="Carder C."/>
            <person name="Carrel L."/>
            <person name="Chako J."/>
            <person name="Chapman J.C."/>
            <person name="Chavez D."/>
            <person name="Chen E."/>
            <person name="Chen G."/>
            <person name="Chen Y."/>
            <person name="Chen Z."/>
            <person name="Chinault C."/>
            <person name="Ciccodicola A."/>
            <person name="Clark S.Y."/>
            <person name="Clarke G."/>
            <person name="Clee C.M."/>
            <person name="Clegg S."/>
            <person name="Clerc-Blankenburg K."/>
            <person name="Clifford K."/>
            <person name="Cobley V."/>
            <person name="Cole C.G."/>
            <person name="Conquer J.S."/>
            <person name="Corby N."/>
            <person name="Connor R.E."/>
            <person name="David R."/>
            <person name="Davies J."/>
            <person name="Davis C."/>
            <person name="Davis J."/>
            <person name="Delgado O."/>
            <person name="Deshazo D."/>
            <person name="Dhami P."/>
            <person name="Ding Y."/>
            <person name="Dinh H."/>
            <person name="Dodsworth S."/>
            <person name="Draper H."/>
            <person name="Dugan-Rocha S."/>
            <person name="Dunham A."/>
            <person name="Dunn M."/>
            <person name="Durbin K.J."/>
            <person name="Dutta I."/>
            <person name="Eades T."/>
            <person name="Ellwood M."/>
            <person name="Emery-Cohen A."/>
            <person name="Errington H."/>
            <person name="Evans K.L."/>
            <person name="Faulkner L."/>
            <person name="Francis F."/>
            <person name="Frankland J."/>
            <person name="Fraser A.E."/>
            <person name="Galgoczy P."/>
            <person name="Gilbert J."/>
            <person name="Gill R."/>
            <person name="Gloeckner G."/>
            <person name="Gregory S.G."/>
            <person name="Gribble S."/>
            <person name="Griffiths C."/>
            <person name="Grocock R."/>
            <person name="Gu Y."/>
            <person name="Gwilliam R."/>
            <person name="Hamilton C."/>
            <person name="Hart E.A."/>
            <person name="Hawes A."/>
            <person name="Heath P.D."/>
            <person name="Heitmann K."/>
            <person name="Hennig S."/>
            <person name="Hernandez J."/>
            <person name="Hinzmann B."/>
            <person name="Ho S."/>
            <person name="Hoffs M."/>
            <person name="Howden P.J."/>
            <person name="Huckle E.J."/>
            <person name="Hume J."/>
            <person name="Hunt P.J."/>
            <person name="Hunt A.R."/>
            <person name="Isherwood J."/>
            <person name="Jacob L."/>
            <person name="Johnson D."/>
            <person name="Jones S."/>
            <person name="de Jong P.J."/>
            <person name="Joseph S.S."/>
            <person name="Keenan S."/>
            <person name="Kelly S."/>
            <person name="Kershaw J.K."/>
            <person name="Khan Z."/>
            <person name="Kioschis P."/>
            <person name="Klages S."/>
            <person name="Knights A.J."/>
            <person name="Kosiura A."/>
            <person name="Kovar-Smith C."/>
            <person name="Laird G.K."/>
            <person name="Langford C."/>
            <person name="Lawlor S."/>
            <person name="Leversha M."/>
            <person name="Lewis L."/>
            <person name="Liu W."/>
            <person name="Lloyd C."/>
            <person name="Lloyd D.M."/>
            <person name="Loulseged H."/>
            <person name="Loveland J.E."/>
            <person name="Lovell J.D."/>
            <person name="Lozado R."/>
            <person name="Lu J."/>
            <person name="Lyne R."/>
            <person name="Ma J."/>
            <person name="Maheshwari M."/>
            <person name="Matthews L.H."/>
            <person name="McDowall J."/>
            <person name="McLaren S."/>
            <person name="McMurray A."/>
            <person name="Meidl P."/>
            <person name="Meitinger T."/>
            <person name="Milne S."/>
            <person name="Miner G."/>
            <person name="Mistry S.L."/>
            <person name="Morgan M."/>
            <person name="Morris S."/>
            <person name="Mueller I."/>
            <person name="Mullikin J.C."/>
            <person name="Nguyen N."/>
            <person name="Nordsiek G."/>
            <person name="Nyakatura G."/>
            <person name="O'dell C.N."/>
            <person name="Okwuonu G."/>
            <person name="Palmer S."/>
            <person name="Pandian R."/>
            <person name="Parker D."/>
            <person name="Parrish J."/>
            <person name="Pasternak S."/>
            <person name="Patel D."/>
            <person name="Pearce A.V."/>
            <person name="Pearson D.M."/>
            <person name="Pelan S.E."/>
            <person name="Perez L."/>
            <person name="Porter K.M."/>
            <person name="Ramsey Y."/>
            <person name="Reichwald K."/>
            <person name="Rhodes S."/>
            <person name="Ridler K.A."/>
            <person name="Schlessinger D."/>
            <person name="Schueler M.G."/>
            <person name="Sehra H.K."/>
            <person name="Shaw-Smith C."/>
            <person name="Shen H."/>
            <person name="Sheridan E.M."/>
            <person name="Shownkeen R."/>
            <person name="Skuce C.D."/>
            <person name="Smith M.L."/>
            <person name="Sotheran E.C."/>
            <person name="Steingruber H.E."/>
            <person name="Steward C.A."/>
            <person name="Storey R."/>
            <person name="Swann R.M."/>
            <person name="Swarbreck D."/>
            <person name="Tabor P.E."/>
            <person name="Taudien S."/>
            <person name="Taylor T."/>
            <person name="Teague B."/>
            <person name="Thomas K."/>
            <person name="Thorpe A."/>
            <person name="Timms K."/>
            <person name="Tracey A."/>
            <person name="Trevanion S."/>
            <person name="Tromans A.C."/>
            <person name="d'Urso M."/>
            <person name="Verduzco D."/>
            <person name="Villasana D."/>
            <person name="Waldron L."/>
            <person name="Wall M."/>
            <person name="Wang Q."/>
            <person name="Warren J."/>
            <person name="Warry G.L."/>
            <person name="Wei X."/>
            <person name="West A."/>
            <person name="Whitehead S.L."/>
            <person name="Whiteley M.N."/>
            <person name="Wilkinson J.E."/>
            <person name="Willey D.L."/>
            <person name="Williams G."/>
            <person name="Williams L."/>
            <person name="Williamson A."/>
            <person name="Williamson H."/>
            <person name="Wilming L."/>
            <person name="Woodmansey R.L."/>
            <person name="Wray P.W."/>
            <person name="Yen J."/>
            <person name="Zhang J."/>
            <person name="Zhou J."/>
            <person name="Zoghbi H."/>
            <person name="Zorilla S."/>
            <person name="Buck D."/>
            <person name="Reinhardt R."/>
            <person name="Poustka A."/>
            <person name="Rosenthal A."/>
            <person name="Lehrach H."/>
            <person name="Meindl A."/>
            <person name="Minx P.J."/>
            <person name="Hillier L.W."/>
            <person name="Willard H.F."/>
            <person name="Wilson R.K."/>
            <person name="Waterston R.H."/>
            <person name="Rice C.M."/>
            <person name="Vaudin M."/>
            <person name="Coulson A."/>
            <person name="Nelson D.L."/>
            <person name="Weinstock G."/>
            <person name="Sulston J.E."/>
            <person name="Durbin R.M."/>
            <person name="Hubbard T."/>
            <person name="Gibbs R.A."/>
            <person name="Beck S."/>
            <person name="Rogers J."/>
            <person name="Bentley D.R."/>
        </authorList>
    </citation>
    <scope>NUCLEOTIDE SEQUENCE [LARGE SCALE GENOMIC DNA]</scope>
</reference>
<reference key="5">
    <citation type="journal article" date="2004" name="Genome Res.">
        <title>The status, quality, and expansion of the NIH full-length cDNA project: the Mammalian Gene Collection (MGC).</title>
        <authorList>
            <consortium name="The MGC Project Team"/>
        </authorList>
    </citation>
    <scope>NUCLEOTIDE SEQUENCE [LARGE SCALE MRNA]</scope>
</reference>
<reference key="6">
    <citation type="journal article" date="2005" name="Biochem. Biophys. Res. Commun.">
        <title>Lysophosphatidylcholine enhances glucose-dependent insulin secretion via an orphan G-protein-coupled receptor.</title>
        <authorList>
            <person name="Soga T."/>
            <person name="Ohishi T."/>
            <person name="Matsui T."/>
            <person name="Saito T."/>
            <person name="Matsumoto M."/>
            <person name="Takasaki J."/>
            <person name="Matsumoto S."/>
            <person name="Kamohara M."/>
            <person name="Hiyama H."/>
            <person name="Yoshida S."/>
            <person name="Momose K."/>
            <person name="Ueda Y."/>
            <person name="Matsushime H."/>
            <person name="Kobori M."/>
            <person name="Furuichi K."/>
        </authorList>
    </citation>
    <scope>TISSUE SPECIFICITY</scope>
    <scope>CHARACTERIZATION</scope>
</reference>
<reference key="7">
    <citation type="journal article" date="2006" name="Cell Metab.">
        <title>Deorphanization of a G protein-coupled receptor for oleoylethanolamide and its use in the discovery of small-molecule hypophagic agents.</title>
        <authorList>
            <person name="Overton H.A."/>
            <person name="Babbs A.J."/>
            <person name="Doel S.M."/>
            <person name="Fyfe M.C.T."/>
            <person name="Gardner L.S."/>
            <person name="Griffin G."/>
            <person name="Jackson H.C."/>
            <person name="Procter M.J."/>
            <person name="Rasamison C.M."/>
            <person name="Tang-Christensen M."/>
            <person name="Widdowson P.S."/>
            <person name="Williams G.M."/>
            <person name="Reynet C."/>
        </authorList>
    </citation>
    <scope>LIGAND-BINDING</scope>
    <scope>FUNCTION</scope>
</reference>
<accession>Q8TDV5</accession>
<accession>Q495H7</accession>
<accession>Q4VBN3</accession>
<dbReference type="EMBL" id="AB083584">
    <property type="protein sequence ID" value="BAB89297.1"/>
    <property type="molecule type" value="Genomic_DNA"/>
</dbReference>
<dbReference type="EMBL" id="AB065936">
    <property type="protein sequence ID" value="BAC06151.1"/>
    <property type="molecule type" value="Genomic_DNA"/>
</dbReference>
<dbReference type="EMBL" id="AY288416">
    <property type="protein sequence ID" value="AAP72125.1"/>
    <property type="molecule type" value="mRNA"/>
</dbReference>
<dbReference type="EMBL" id="AL035423">
    <property type="status" value="NOT_ANNOTATED_CDS"/>
    <property type="molecule type" value="Genomic_DNA"/>
</dbReference>
<dbReference type="EMBL" id="BC095502">
    <property type="protein sequence ID" value="AAH95502.1"/>
    <property type="molecule type" value="mRNA"/>
</dbReference>
<dbReference type="EMBL" id="BC101166">
    <property type="protein sequence ID" value="AAI01167.1"/>
    <property type="molecule type" value="mRNA"/>
</dbReference>
<dbReference type="EMBL" id="BC101167">
    <property type="protein sequence ID" value="AAI01168.1"/>
    <property type="molecule type" value="mRNA"/>
</dbReference>
<dbReference type="EMBL" id="BC101168">
    <property type="protein sequence ID" value="AAI01169.1"/>
    <property type="molecule type" value="mRNA"/>
</dbReference>
<dbReference type="EMBL" id="BC126179">
    <property type="protein sequence ID" value="AAI26180.1"/>
    <property type="molecule type" value="mRNA"/>
</dbReference>
<dbReference type="EMBL" id="BC126181">
    <property type="protein sequence ID" value="AAI26182.1"/>
    <property type="molecule type" value="mRNA"/>
</dbReference>
<dbReference type="CCDS" id="CCDS14625.1"/>
<dbReference type="RefSeq" id="NP_848566.1">
    <property type="nucleotide sequence ID" value="NM_178471.3"/>
</dbReference>
<dbReference type="PDB" id="7WCM">
    <property type="method" value="EM"/>
    <property type="resolution" value="2.33 A"/>
    <property type="chains" value="R=1-335"/>
</dbReference>
<dbReference type="PDB" id="7WCN">
    <property type="method" value="EM"/>
    <property type="resolution" value="2.87 A"/>
    <property type="chains" value="R=1-335"/>
</dbReference>
<dbReference type="PDB" id="7XZ5">
    <property type="method" value="EM"/>
    <property type="resolution" value="3.10 A"/>
    <property type="chains" value="R=1-335"/>
</dbReference>
<dbReference type="PDB" id="7XZ6">
    <property type="method" value="EM"/>
    <property type="resolution" value="2.80 A"/>
    <property type="chains" value="R=1-335"/>
</dbReference>
<dbReference type="PDB" id="8VHF">
    <property type="method" value="EM"/>
    <property type="resolution" value="3.51 A"/>
    <property type="chains" value="R=1-335"/>
</dbReference>
<dbReference type="PDB" id="8ZR5">
    <property type="method" value="EM"/>
    <property type="resolution" value="3.31 A"/>
    <property type="chains" value="C=1-335"/>
</dbReference>
<dbReference type="PDB" id="8ZRK">
    <property type="method" value="EM"/>
    <property type="resolution" value="2.82 A"/>
    <property type="chains" value="R=1-335"/>
</dbReference>
<dbReference type="PDBsum" id="7WCM"/>
<dbReference type="PDBsum" id="7WCN"/>
<dbReference type="PDBsum" id="7XZ5"/>
<dbReference type="PDBsum" id="7XZ6"/>
<dbReference type="PDBsum" id="8VHF"/>
<dbReference type="PDBsum" id="8ZR5"/>
<dbReference type="PDBsum" id="8ZRK"/>
<dbReference type="EMDB" id="EMD-32424"/>
<dbReference type="EMDB" id="EMD-32425"/>
<dbReference type="EMDB" id="EMD-33525"/>
<dbReference type="EMDB" id="EMD-33526"/>
<dbReference type="EMDB" id="EMD-43236"/>
<dbReference type="EMDB" id="EMD-60392"/>
<dbReference type="EMDB" id="EMD-60399"/>
<dbReference type="SMR" id="Q8TDV5"/>
<dbReference type="BioGRID" id="126586">
    <property type="interactions" value="5"/>
</dbReference>
<dbReference type="FunCoup" id="Q8TDV5">
    <property type="interactions" value="262"/>
</dbReference>
<dbReference type="IntAct" id="Q8TDV5">
    <property type="interactions" value="3"/>
</dbReference>
<dbReference type="STRING" id="9606.ENSP00000276218"/>
<dbReference type="BindingDB" id="Q8TDV5"/>
<dbReference type="ChEMBL" id="CHEMBL5652"/>
<dbReference type="DrugBank" id="DB12084">
    <property type="generic name" value="ADP-597"/>
</dbReference>
<dbReference type="DrugBank" id="DB05166">
    <property type="generic name" value="APD668"/>
</dbReference>
<dbReference type="DrugBank" id="DB11773">
    <property type="generic name" value="BMS-903452"/>
</dbReference>
<dbReference type="DrugBank" id="DB13171">
    <property type="generic name" value="Glyceryl 1-oleate"/>
</dbReference>
<dbReference type="DrugBank" id="DB12627">
    <property type="generic name" value="GSK-1292263"/>
</dbReference>
<dbReference type="DrugBank" id="DB12345">
    <property type="generic name" value="MBX-2982"/>
</dbReference>
<dbReference type="DrugBank" id="DB16495">
    <property type="generic name" value="Oleic monoethanolamide"/>
</dbReference>
<dbReference type="DrugBank" id="DB14043">
    <property type="generic name" value="Palmidrol"/>
</dbReference>
<dbReference type="GuidetoPHARMACOLOGY" id="126"/>
<dbReference type="iPTMnet" id="Q8TDV5"/>
<dbReference type="PhosphoSitePlus" id="Q8TDV5"/>
<dbReference type="BioMuta" id="GPR119"/>
<dbReference type="DMDM" id="62510696"/>
<dbReference type="jPOST" id="Q8TDV5"/>
<dbReference type="MassIVE" id="Q8TDV5"/>
<dbReference type="PaxDb" id="9606-ENSP00000276218"/>
<dbReference type="ProteomicsDB" id="74344"/>
<dbReference type="Antibodypedia" id="30179">
    <property type="antibodies" value="274 antibodies from 33 providers"/>
</dbReference>
<dbReference type="DNASU" id="139760"/>
<dbReference type="Ensembl" id="ENST00000276218.4">
    <property type="protein sequence ID" value="ENSP00000276218.2"/>
    <property type="gene ID" value="ENSG00000147262.5"/>
</dbReference>
<dbReference type="Ensembl" id="ENST00000682440.1">
    <property type="protein sequence ID" value="ENSP00000508182.1"/>
    <property type="gene ID" value="ENSG00000147262.5"/>
</dbReference>
<dbReference type="GeneID" id="139760"/>
<dbReference type="KEGG" id="hsa:139760"/>
<dbReference type="MANE-Select" id="ENST00000682440.1">
    <property type="protein sequence ID" value="ENSP00000508182.1"/>
    <property type="RefSeq nucleotide sequence ID" value="NM_178471.3"/>
    <property type="RefSeq protein sequence ID" value="NP_848566.1"/>
</dbReference>
<dbReference type="UCSC" id="uc011muv.3">
    <property type="organism name" value="human"/>
</dbReference>
<dbReference type="AGR" id="HGNC:19060"/>
<dbReference type="CTD" id="139760"/>
<dbReference type="DisGeNET" id="139760"/>
<dbReference type="GeneCards" id="GPR119"/>
<dbReference type="HGNC" id="HGNC:19060">
    <property type="gene designation" value="GPR119"/>
</dbReference>
<dbReference type="HPA" id="ENSG00000147262">
    <property type="expression patterns" value="Tissue enriched (pancreas)"/>
</dbReference>
<dbReference type="MIM" id="300513">
    <property type="type" value="gene"/>
</dbReference>
<dbReference type="neXtProt" id="NX_Q8TDV5"/>
<dbReference type="OpenTargets" id="ENSG00000147262"/>
<dbReference type="PharmGKB" id="PA134928131"/>
<dbReference type="VEuPathDB" id="HostDB:ENSG00000147262"/>
<dbReference type="eggNOG" id="KOG3656">
    <property type="taxonomic scope" value="Eukaryota"/>
</dbReference>
<dbReference type="GeneTree" id="ENSGT01120000271819"/>
<dbReference type="HOGENOM" id="CLU_009579_11_5_1"/>
<dbReference type="InParanoid" id="Q8TDV5"/>
<dbReference type="OMA" id="IFQQTTY"/>
<dbReference type="OrthoDB" id="10011551at2759"/>
<dbReference type="PAN-GO" id="Q8TDV5">
    <property type="GO annotations" value="6 GO annotations based on evolutionary models"/>
</dbReference>
<dbReference type="PhylomeDB" id="Q8TDV5"/>
<dbReference type="TreeFam" id="TF325411"/>
<dbReference type="PathwayCommons" id="Q8TDV5"/>
<dbReference type="Reactome" id="R-HSA-381771">
    <property type="pathway name" value="Synthesis, secretion, and inactivation of Glucagon-like Peptide-1 (GLP-1)"/>
</dbReference>
<dbReference type="Reactome" id="R-HSA-400511">
    <property type="pathway name" value="Synthesis, secretion, and inactivation of Glucose-dependent Insulinotropic Polypeptide (GIP)"/>
</dbReference>
<dbReference type="SignaLink" id="Q8TDV5"/>
<dbReference type="SIGNOR" id="Q8TDV5"/>
<dbReference type="BioGRID-ORCS" id="139760">
    <property type="hits" value="10 hits in 772 CRISPR screens"/>
</dbReference>
<dbReference type="GeneWiki" id="GPR119"/>
<dbReference type="GenomeRNAi" id="139760"/>
<dbReference type="Pharos" id="Q8TDV5">
    <property type="development level" value="Tclin"/>
</dbReference>
<dbReference type="PRO" id="PR:Q8TDV5"/>
<dbReference type="Proteomes" id="UP000005640">
    <property type="component" value="Chromosome X"/>
</dbReference>
<dbReference type="RNAct" id="Q8TDV5">
    <property type="molecule type" value="protein"/>
</dbReference>
<dbReference type="Bgee" id="ENSG00000147262">
    <property type="expression patterns" value="Expressed in islet of Langerhans and 6 other cell types or tissues"/>
</dbReference>
<dbReference type="GO" id="GO:0005737">
    <property type="term" value="C:cytoplasm"/>
    <property type="evidence" value="ECO:0000318"/>
    <property type="project" value="GO_Central"/>
</dbReference>
<dbReference type="GO" id="GO:0005886">
    <property type="term" value="C:plasma membrane"/>
    <property type="evidence" value="ECO:0000318"/>
    <property type="project" value="GO_Central"/>
</dbReference>
<dbReference type="GO" id="GO:0043235">
    <property type="term" value="C:receptor complex"/>
    <property type="evidence" value="ECO:0000314"/>
    <property type="project" value="MGI"/>
</dbReference>
<dbReference type="GO" id="GO:0004930">
    <property type="term" value="F:G protein-coupled receptor activity"/>
    <property type="evidence" value="ECO:0000318"/>
    <property type="project" value="GO_Central"/>
</dbReference>
<dbReference type="GO" id="GO:0031210">
    <property type="term" value="F:phosphatidylcholine binding"/>
    <property type="evidence" value="ECO:0000318"/>
    <property type="project" value="GO_Central"/>
</dbReference>
<dbReference type="GO" id="GO:0007189">
    <property type="term" value="P:adenylate cyclase-activating G protein-coupled receptor signaling pathway"/>
    <property type="evidence" value="ECO:0000318"/>
    <property type="project" value="GO_Central"/>
</dbReference>
<dbReference type="GO" id="GO:0030073">
    <property type="term" value="P:insulin secretion"/>
    <property type="evidence" value="ECO:0007669"/>
    <property type="project" value="Ensembl"/>
</dbReference>
<dbReference type="GO" id="GO:0019222">
    <property type="term" value="P:regulation of metabolic process"/>
    <property type="evidence" value="ECO:0000318"/>
    <property type="project" value="GO_Central"/>
</dbReference>
<dbReference type="CDD" id="cd15104">
    <property type="entry name" value="7tmA_GPR119_R_insulinotropic_receptor"/>
    <property type="match status" value="1"/>
</dbReference>
<dbReference type="FunFam" id="1.20.1070.10:FF:000294">
    <property type="entry name" value="Glucose-dependent insulinotropic receptor"/>
    <property type="match status" value="1"/>
</dbReference>
<dbReference type="Gene3D" id="1.20.1070.10">
    <property type="entry name" value="Rhodopsin 7-helix transmembrane proteins"/>
    <property type="match status" value="1"/>
</dbReference>
<dbReference type="InterPro" id="IPR000276">
    <property type="entry name" value="GPCR_Rhodpsn"/>
</dbReference>
<dbReference type="InterPro" id="IPR017452">
    <property type="entry name" value="GPCR_Rhodpsn_7TM"/>
</dbReference>
<dbReference type="InterPro" id="IPR028336">
    <property type="entry name" value="GPR119"/>
</dbReference>
<dbReference type="PANTHER" id="PTHR22750">
    <property type="entry name" value="G-PROTEIN COUPLED RECEPTOR"/>
    <property type="match status" value="1"/>
</dbReference>
<dbReference type="Pfam" id="PF00001">
    <property type="entry name" value="7tm_1"/>
    <property type="match status" value="1"/>
</dbReference>
<dbReference type="PRINTS" id="PR00237">
    <property type="entry name" value="GPCRRHODOPSN"/>
</dbReference>
<dbReference type="SUPFAM" id="SSF81321">
    <property type="entry name" value="Family A G protein-coupled receptor-like"/>
    <property type="match status" value="1"/>
</dbReference>
<dbReference type="PROSITE" id="PS00237">
    <property type="entry name" value="G_PROTEIN_RECEP_F1_1"/>
    <property type="match status" value="1"/>
</dbReference>
<dbReference type="PROSITE" id="PS50262">
    <property type="entry name" value="G_PROTEIN_RECEP_F1_2"/>
    <property type="match status" value="1"/>
</dbReference>
<gene>
    <name type="primary">GPR119</name>
</gene>
<evidence type="ECO:0000255" key="1"/>
<evidence type="ECO:0000255" key="2">
    <source>
        <dbReference type="PROSITE-ProRule" id="PRU00521"/>
    </source>
</evidence>
<evidence type="ECO:0000269" key="3">
    <source>
    </source>
</evidence>
<evidence type="ECO:0000269" key="4">
    <source>
    </source>
</evidence>
<evidence type="ECO:0000305" key="5"/>
<evidence type="ECO:0007829" key="6">
    <source>
        <dbReference type="PDB" id="7WCM"/>
    </source>
</evidence>
<evidence type="ECO:0007829" key="7">
    <source>
        <dbReference type="PDB" id="7WCN"/>
    </source>
</evidence>
<evidence type="ECO:0007829" key="8">
    <source>
        <dbReference type="PDB" id="7XZ6"/>
    </source>
</evidence>
<protein>
    <recommendedName>
        <fullName>Glucose-dependent insulinotropic receptor</fullName>
    </recommendedName>
    <alternativeName>
        <fullName>G-protein coupled receptor 119</fullName>
    </alternativeName>
</protein>